<protein>
    <recommendedName>
        <fullName evidence="2">Photosystem II D2 protein</fullName>
        <shortName evidence="2">PSII D2 protein</shortName>
        <ecNumber evidence="2">1.10.3.9</ecNumber>
    </recommendedName>
    <alternativeName>
        <fullName evidence="2">Photosystem Q(A) protein</fullName>
    </alternativeName>
</protein>
<sequence length="353" mass="39549">MTIALGKFTKDENDLFDIMDDWLRRDRFVFVGWSGLLLFPCAYFALGGWFTGTTFVTSWYTHGLASSYLEGCNFLTAAVSTPANSLAHSLLLLWGPEAQGDFTRWCQLGGLWTFVALHGAFGLIGFMLRQFELARSVQLRPYNAIAFSGPIAVFVSVFLIYPLGQSGWFFAPSFGVAAIFRFILFFQGFHNWTLNPFHMMGVAGVLGAALLCAIHGATVENTLFEDGDGANTFRAFNPTQAEETYSMVTANRFWSQIFGVAFSNKRWLHFFMLFVPVTGLWMSALGVVGLALNLRAYDFVSQEIRAAEDPEFETFYTKNILLNEGIRAWMAAQDQPHENLIFPEEVLPRGNAL</sequence>
<evidence type="ECO:0000250" key="1">
    <source>
        <dbReference type="UniProtKB" id="P56761"/>
    </source>
</evidence>
<evidence type="ECO:0000255" key="2">
    <source>
        <dbReference type="HAMAP-Rule" id="MF_01383"/>
    </source>
</evidence>
<geneLocation type="chloroplast"/>
<accession>Q49L03</accession>
<dbReference type="EC" id="1.10.3.9" evidence="2"/>
<dbReference type="EMBL" id="AY780259">
    <property type="protein sequence ID" value="AAX21024.1"/>
    <property type="molecule type" value="Genomic_DNA"/>
</dbReference>
<dbReference type="RefSeq" id="YP_636294.1">
    <property type="nucleotide sequence ID" value="NC_008115.1"/>
</dbReference>
<dbReference type="SMR" id="Q49L03"/>
<dbReference type="GeneID" id="4108370"/>
<dbReference type="GO" id="GO:0009535">
    <property type="term" value="C:chloroplast thylakoid membrane"/>
    <property type="evidence" value="ECO:0007669"/>
    <property type="project" value="UniProtKB-SubCell"/>
</dbReference>
<dbReference type="GO" id="GO:0009523">
    <property type="term" value="C:photosystem II"/>
    <property type="evidence" value="ECO:0007669"/>
    <property type="project" value="UniProtKB-KW"/>
</dbReference>
<dbReference type="GO" id="GO:0016168">
    <property type="term" value="F:chlorophyll binding"/>
    <property type="evidence" value="ECO:0007669"/>
    <property type="project" value="UniProtKB-UniRule"/>
</dbReference>
<dbReference type="GO" id="GO:0045156">
    <property type="term" value="F:electron transporter, transferring electrons within the cyclic electron transport pathway of photosynthesis activity"/>
    <property type="evidence" value="ECO:0007669"/>
    <property type="project" value="InterPro"/>
</dbReference>
<dbReference type="GO" id="GO:0005506">
    <property type="term" value="F:iron ion binding"/>
    <property type="evidence" value="ECO:0007669"/>
    <property type="project" value="UniProtKB-UniRule"/>
</dbReference>
<dbReference type="GO" id="GO:0010242">
    <property type="term" value="F:oxygen evolving activity"/>
    <property type="evidence" value="ECO:0007669"/>
    <property type="project" value="UniProtKB-EC"/>
</dbReference>
<dbReference type="GO" id="GO:0009772">
    <property type="term" value="P:photosynthetic electron transport in photosystem II"/>
    <property type="evidence" value="ECO:0007669"/>
    <property type="project" value="InterPro"/>
</dbReference>
<dbReference type="CDD" id="cd09288">
    <property type="entry name" value="Photosystem-II_D2"/>
    <property type="match status" value="1"/>
</dbReference>
<dbReference type="FunFam" id="1.20.85.10:FF:000001">
    <property type="entry name" value="photosystem II D2 protein-like"/>
    <property type="match status" value="1"/>
</dbReference>
<dbReference type="Gene3D" id="1.20.85.10">
    <property type="entry name" value="Photosystem II protein D1-like"/>
    <property type="match status" value="1"/>
</dbReference>
<dbReference type="HAMAP" id="MF_01383">
    <property type="entry name" value="PSII_PsbD_D2"/>
    <property type="match status" value="1"/>
</dbReference>
<dbReference type="InterPro" id="IPR055266">
    <property type="entry name" value="D1/D2"/>
</dbReference>
<dbReference type="InterPro" id="IPR036854">
    <property type="entry name" value="Photo_II_D1/D2_sf"/>
</dbReference>
<dbReference type="InterPro" id="IPR000484">
    <property type="entry name" value="Photo_RC_L/M"/>
</dbReference>
<dbReference type="InterPro" id="IPR055265">
    <property type="entry name" value="Photo_RC_L/M_CS"/>
</dbReference>
<dbReference type="InterPro" id="IPR005868">
    <property type="entry name" value="PSII_PsbD/D2"/>
</dbReference>
<dbReference type="NCBIfam" id="TIGR01152">
    <property type="entry name" value="psbD"/>
    <property type="match status" value="1"/>
</dbReference>
<dbReference type="PANTHER" id="PTHR33149:SF12">
    <property type="entry name" value="PHOTOSYSTEM II D2 PROTEIN"/>
    <property type="match status" value="1"/>
</dbReference>
<dbReference type="PANTHER" id="PTHR33149">
    <property type="entry name" value="PHOTOSYSTEM II PROTEIN D1"/>
    <property type="match status" value="1"/>
</dbReference>
<dbReference type="Pfam" id="PF00124">
    <property type="entry name" value="Photo_RC"/>
    <property type="match status" value="1"/>
</dbReference>
<dbReference type="PRINTS" id="PR00256">
    <property type="entry name" value="REACTNCENTRE"/>
</dbReference>
<dbReference type="SUPFAM" id="SSF81483">
    <property type="entry name" value="Bacterial photosystem II reaction centre, L and M subunits"/>
    <property type="match status" value="1"/>
</dbReference>
<dbReference type="PROSITE" id="PS00244">
    <property type="entry name" value="REACTION_CENTER"/>
    <property type="match status" value="1"/>
</dbReference>
<organism>
    <name type="scientific">Eucalyptus globulus subsp. globulus</name>
    <name type="common">Tasmanian blue gum</name>
    <dbReference type="NCBI Taxonomy" id="71271"/>
    <lineage>
        <taxon>Eukaryota</taxon>
        <taxon>Viridiplantae</taxon>
        <taxon>Streptophyta</taxon>
        <taxon>Embryophyta</taxon>
        <taxon>Tracheophyta</taxon>
        <taxon>Spermatophyta</taxon>
        <taxon>Magnoliopsida</taxon>
        <taxon>eudicotyledons</taxon>
        <taxon>Gunneridae</taxon>
        <taxon>Pentapetalae</taxon>
        <taxon>rosids</taxon>
        <taxon>malvids</taxon>
        <taxon>Myrtales</taxon>
        <taxon>Myrtaceae</taxon>
        <taxon>Myrtoideae</taxon>
        <taxon>Eucalypteae</taxon>
        <taxon>Eucalyptus</taxon>
    </lineage>
</organism>
<gene>
    <name evidence="2" type="primary">psbD</name>
</gene>
<proteinExistence type="inferred from homology"/>
<comment type="function">
    <text evidence="2">Photosystem II (PSII) is a light-driven water:plastoquinone oxidoreductase that uses light energy to abstract electrons from H(2)O, generating O(2) and a proton gradient subsequently used for ATP formation. It consists of a core antenna complex that captures photons, and an electron transfer chain that converts photonic excitation into a charge separation. The D1/D2 (PsbA/PsbD) reaction center heterodimer binds P680, the primary electron donor of PSII as well as several subsequent electron acceptors. D2 is needed for assembly of a stable PSII complex.</text>
</comment>
<comment type="catalytic activity">
    <reaction evidence="2">
        <text>2 a plastoquinone + 4 hnu + 2 H2O = 2 a plastoquinol + O2</text>
        <dbReference type="Rhea" id="RHEA:36359"/>
        <dbReference type="Rhea" id="RHEA-COMP:9561"/>
        <dbReference type="Rhea" id="RHEA-COMP:9562"/>
        <dbReference type="ChEBI" id="CHEBI:15377"/>
        <dbReference type="ChEBI" id="CHEBI:15379"/>
        <dbReference type="ChEBI" id="CHEBI:17757"/>
        <dbReference type="ChEBI" id="CHEBI:30212"/>
        <dbReference type="ChEBI" id="CHEBI:62192"/>
        <dbReference type="EC" id="1.10.3.9"/>
    </reaction>
</comment>
<comment type="cofactor">
    <text evidence="2">The D1/D2 heterodimer binds P680, chlorophylls that are the primary electron donor of PSII, and subsequent electron acceptors. It shares a non-heme iron and each subunit binds pheophytin, quinone, additional chlorophylls, carotenoids and lipids. There is also a Cl(-1) ion associated with D1 and D2, which is required for oxygen evolution. The PSII complex binds additional chlorophylls, carotenoids and specific lipids.</text>
</comment>
<comment type="subunit">
    <text evidence="2">PSII is composed of 1 copy each of membrane proteins PsbA, PsbB, PsbC, PsbD, PsbE, PsbF, PsbH, PsbI, PsbJ, PsbK, PsbL, PsbM, PsbT, PsbX, PsbY, PsbZ, Psb30/Ycf12, at least 3 peripheral proteins of the oxygen-evolving complex and a large number of cofactors. It forms dimeric complexes.</text>
</comment>
<comment type="subcellular location">
    <subcellularLocation>
        <location evidence="2">Plastid</location>
        <location evidence="2">Chloroplast thylakoid membrane</location>
        <topology evidence="2">Multi-pass membrane protein</topology>
    </subcellularLocation>
</comment>
<comment type="miscellaneous">
    <text evidence="2">2 of the reaction center chlorophylls (ChlD1 and ChlD2) are entirely coordinated by water.</text>
</comment>
<comment type="similarity">
    <text evidence="2">Belongs to the reaction center PufL/M/PsbA/D family.</text>
</comment>
<name>PSBD_EUCGG</name>
<keyword id="KW-0007">Acetylation</keyword>
<keyword id="KW-0148">Chlorophyll</keyword>
<keyword id="KW-0150">Chloroplast</keyword>
<keyword id="KW-0157">Chromophore</keyword>
<keyword id="KW-0249">Electron transport</keyword>
<keyword id="KW-0408">Iron</keyword>
<keyword id="KW-0460">Magnesium</keyword>
<keyword id="KW-0472">Membrane</keyword>
<keyword id="KW-0479">Metal-binding</keyword>
<keyword id="KW-0560">Oxidoreductase</keyword>
<keyword id="KW-0597">Phosphoprotein</keyword>
<keyword id="KW-0602">Photosynthesis</keyword>
<keyword id="KW-0604">Photosystem II</keyword>
<keyword id="KW-0934">Plastid</keyword>
<keyword id="KW-0793">Thylakoid</keyword>
<keyword id="KW-0812">Transmembrane</keyword>
<keyword id="KW-1133">Transmembrane helix</keyword>
<keyword id="KW-0813">Transport</keyword>
<feature type="initiator methionine" description="Removed" evidence="1">
    <location>
        <position position="1"/>
    </location>
</feature>
<feature type="chain" id="PRO_0000359651" description="Photosystem II D2 protein">
    <location>
        <begin position="2"/>
        <end position="353"/>
    </location>
</feature>
<feature type="transmembrane region" description="Helical" evidence="2">
    <location>
        <begin position="41"/>
        <end position="61"/>
    </location>
</feature>
<feature type="transmembrane region" description="Helical" evidence="2">
    <location>
        <begin position="125"/>
        <end position="141"/>
    </location>
</feature>
<feature type="transmembrane region" description="Helical" evidence="2">
    <location>
        <begin position="153"/>
        <end position="166"/>
    </location>
</feature>
<feature type="transmembrane region" description="Helical" evidence="2">
    <location>
        <begin position="208"/>
        <end position="228"/>
    </location>
</feature>
<feature type="transmembrane region" description="Helical" evidence="2">
    <location>
        <begin position="279"/>
        <end position="295"/>
    </location>
</feature>
<feature type="binding site" description="axial binding residue" evidence="2">
    <location>
        <position position="118"/>
    </location>
    <ligand>
        <name>chlorophyll a</name>
        <dbReference type="ChEBI" id="CHEBI:58416"/>
        <label>ChlzD2</label>
    </ligand>
    <ligandPart>
        <name>Mg</name>
        <dbReference type="ChEBI" id="CHEBI:25107"/>
    </ligandPart>
</feature>
<feature type="binding site" evidence="2">
    <location>
        <position position="130"/>
    </location>
    <ligand>
        <name>pheophytin a</name>
        <dbReference type="ChEBI" id="CHEBI:136840"/>
        <label>D2</label>
    </ligand>
</feature>
<feature type="binding site" evidence="2">
    <location>
        <position position="143"/>
    </location>
    <ligand>
        <name>pheophytin a</name>
        <dbReference type="ChEBI" id="CHEBI:136840"/>
        <label>D2</label>
    </ligand>
</feature>
<feature type="binding site" description="axial binding residue" evidence="2">
    <location>
        <position position="198"/>
    </location>
    <ligand>
        <name>chlorophyll a</name>
        <dbReference type="ChEBI" id="CHEBI:58416"/>
        <label>PD2</label>
    </ligand>
    <ligandPart>
        <name>Mg</name>
        <dbReference type="ChEBI" id="CHEBI:25107"/>
    </ligandPart>
</feature>
<feature type="binding site" evidence="2">
    <location>
        <position position="215"/>
    </location>
    <ligand>
        <name>a plastoquinone</name>
        <dbReference type="ChEBI" id="CHEBI:17757"/>
        <label>Q(A)</label>
    </ligand>
</feature>
<feature type="binding site" evidence="2">
    <location>
        <position position="215"/>
    </location>
    <ligand>
        <name>Fe cation</name>
        <dbReference type="ChEBI" id="CHEBI:24875"/>
        <note>ligand shared with heterodimeric partner</note>
    </ligand>
</feature>
<feature type="binding site" evidence="2">
    <location>
        <position position="262"/>
    </location>
    <ligand>
        <name>a plastoquinone</name>
        <dbReference type="ChEBI" id="CHEBI:17757"/>
        <label>Q(A)</label>
    </ligand>
</feature>
<feature type="binding site" evidence="2">
    <location>
        <position position="269"/>
    </location>
    <ligand>
        <name>Fe cation</name>
        <dbReference type="ChEBI" id="CHEBI:24875"/>
        <note>ligand shared with heterodimeric partner</note>
    </ligand>
</feature>
<feature type="modified residue" description="N-acetylthreonine" evidence="1">
    <location>
        <position position="2"/>
    </location>
</feature>
<feature type="modified residue" description="Phosphothreonine" evidence="1">
    <location>
        <position position="2"/>
    </location>
</feature>
<reference key="1">
    <citation type="journal article" date="2005" name="DNA Res.">
        <title>Complete nucleotide sequence of the chloroplast genome from the Tasmanian blue gum, Eucalyptus globulus (Myrtaceae).</title>
        <authorList>
            <person name="Steane D.A."/>
        </authorList>
    </citation>
    <scope>NUCLEOTIDE SEQUENCE [LARGE SCALE GENOMIC DNA]</scope>
</reference>